<organism>
    <name type="scientific">Lysinibacillus sphaericus (strain C3-41)</name>
    <dbReference type="NCBI Taxonomy" id="444177"/>
    <lineage>
        <taxon>Bacteria</taxon>
        <taxon>Bacillati</taxon>
        <taxon>Bacillota</taxon>
        <taxon>Bacilli</taxon>
        <taxon>Bacillales</taxon>
        <taxon>Bacillaceae</taxon>
        <taxon>Lysinibacillus</taxon>
    </lineage>
</organism>
<comment type="function">
    <text evidence="1">Allows the formation of correctly charged Asn-tRNA(Asn) or Gln-tRNA(Gln) through the transamidation of misacylated Asp-tRNA(Asn) or Glu-tRNA(Gln) in organisms which lack either or both of asparaginyl-tRNA or glutaminyl-tRNA synthetases. The reaction takes place in the presence of glutamine and ATP through an activated phospho-Asp-tRNA(Asn) or phospho-Glu-tRNA(Gln).</text>
</comment>
<comment type="catalytic activity">
    <reaction evidence="1">
        <text>L-glutamyl-tRNA(Gln) + L-glutamine + ATP + H2O = L-glutaminyl-tRNA(Gln) + L-glutamate + ADP + phosphate + H(+)</text>
        <dbReference type="Rhea" id="RHEA:17521"/>
        <dbReference type="Rhea" id="RHEA-COMP:9681"/>
        <dbReference type="Rhea" id="RHEA-COMP:9684"/>
        <dbReference type="ChEBI" id="CHEBI:15377"/>
        <dbReference type="ChEBI" id="CHEBI:15378"/>
        <dbReference type="ChEBI" id="CHEBI:29985"/>
        <dbReference type="ChEBI" id="CHEBI:30616"/>
        <dbReference type="ChEBI" id="CHEBI:43474"/>
        <dbReference type="ChEBI" id="CHEBI:58359"/>
        <dbReference type="ChEBI" id="CHEBI:78520"/>
        <dbReference type="ChEBI" id="CHEBI:78521"/>
        <dbReference type="ChEBI" id="CHEBI:456216"/>
    </reaction>
</comment>
<comment type="catalytic activity">
    <reaction evidence="1">
        <text>L-aspartyl-tRNA(Asn) + L-glutamine + ATP + H2O = L-asparaginyl-tRNA(Asn) + L-glutamate + ADP + phosphate + 2 H(+)</text>
        <dbReference type="Rhea" id="RHEA:14513"/>
        <dbReference type="Rhea" id="RHEA-COMP:9674"/>
        <dbReference type="Rhea" id="RHEA-COMP:9677"/>
        <dbReference type="ChEBI" id="CHEBI:15377"/>
        <dbReference type="ChEBI" id="CHEBI:15378"/>
        <dbReference type="ChEBI" id="CHEBI:29985"/>
        <dbReference type="ChEBI" id="CHEBI:30616"/>
        <dbReference type="ChEBI" id="CHEBI:43474"/>
        <dbReference type="ChEBI" id="CHEBI:58359"/>
        <dbReference type="ChEBI" id="CHEBI:78515"/>
        <dbReference type="ChEBI" id="CHEBI:78516"/>
        <dbReference type="ChEBI" id="CHEBI:456216"/>
    </reaction>
</comment>
<comment type="subunit">
    <text evidence="1">Heterotrimer of A, B and C subunits.</text>
</comment>
<comment type="similarity">
    <text evidence="1">Belongs to the GatB/GatE family. GatB subfamily.</text>
</comment>
<gene>
    <name evidence="1" type="primary">gatB</name>
    <name type="ordered locus">Bsph_0230</name>
</gene>
<feature type="chain" id="PRO_1000095219" description="Aspartyl/glutamyl-tRNA(Asn/Gln) amidotransferase subunit B">
    <location>
        <begin position="1"/>
        <end position="475"/>
    </location>
</feature>
<dbReference type="EC" id="6.3.5.-" evidence="1"/>
<dbReference type="EMBL" id="CP000817">
    <property type="protein sequence ID" value="ACA37861.1"/>
    <property type="molecule type" value="Genomic_DNA"/>
</dbReference>
<dbReference type="RefSeq" id="WP_012292029.1">
    <property type="nucleotide sequence ID" value="NC_010382.1"/>
</dbReference>
<dbReference type="SMR" id="B1HTX0"/>
<dbReference type="EnsemblBacteria" id="ACA37861">
    <property type="protein sequence ID" value="ACA37861"/>
    <property type="gene ID" value="Bsph_0230"/>
</dbReference>
<dbReference type="KEGG" id="lsp:Bsph_0230"/>
<dbReference type="HOGENOM" id="CLU_019240_0_0_9"/>
<dbReference type="Proteomes" id="UP000002164">
    <property type="component" value="Chromosome"/>
</dbReference>
<dbReference type="GO" id="GO:0050566">
    <property type="term" value="F:asparaginyl-tRNA synthase (glutamine-hydrolyzing) activity"/>
    <property type="evidence" value="ECO:0007669"/>
    <property type="project" value="RHEA"/>
</dbReference>
<dbReference type="GO" id="GO:0005524">
    <property type="term" value="F:ATP binding"/>
    <property type="evidence" value="ECO:0007669"/>
    <property type="project" value="UniProtKB-KW"/>
</dbReference>
<dbReference type="GO" id="GO:0050567">
    <property type="term" value="F:glutaminyl-tRNA synthase (glutamine-hydrolyzing) activity"/>
    <property type="evidence" value="ECO:0007669"/>
    <property type="project" value="UniProtKB-UniRule"/>
</dbReference>
<dbReference type="GO" id="GO:0070681">
    <property type="term" value="P:glutaminyl-tRNAGln biosynthesis via transamidation"/>
    <property type="evidence" value="ECO:0007669"/>
    <property type="project" value="TreeGrafter"/>
</dbReference>
<dbReference type="GO" id="GO:0006412">
    <property type="term" value="P:translation"/>
    <property type="evidence" value="ECO:0007669"/>
    <property type="project" value="UniProtKB-UniRule"/>
</dbReference>
<dbReference type="FunFam" id="1.10.10.410:FF:000001">
    <property type="entry name" value="Aspartyl/glutamyl-tRNA(Asn/Gln) amidotransferase subunit B"/>
    <property type="match status" value="1"/>
</dbReference>
<dbReference type="FunFam" id="1.10.150.380:FF:000001">
    <property type="entry name" value="Aspartyl/glutamyl-tRNA(Asn/Gln) amidotransferase subunit B"/>
    <property type="match status" value="1"/>
</dbReference>
<dbReference type="Gene3D" id="1.10.10.410">
    <property type="match status" value="1"/>
</dbReference>
<dbReference type="Gene3D" id="1.10.150.380">
    <property type="entry name" value="GatB domain, N-terminal subdomain"/>
    <property type="match status" value="1"/>
</dbReference>
<dbReference type="HAMAP" id="MF_00121">
    <property type="entry name" value="GatB"/>
    <property type="match status" value="1"/>
</dbReference>
<dbReference type="InterPro" id="IPR017959">
    <property type="entry name" value="Asn/Gln-tRNA_amidoTrfase_suB/E"/>
</dbReference>
<dbReference type="InterPro" id="IPR006075">
    <property type="entry name" value="Asn/Gln-tRNA_Trfase_suB/E_cat"/>
</dbReference>
<dbReference type="InterPro" id="IPR018027">
    <property type="entry name" value="Asn/Gln_amidotransferase"/>
</dbReference>
<dbReference type="InterPro" id="IPR003789">
    <property type="entry name" value="Asn/Gln_tRNA_amidoTrase-B-like"/>
</dbReference>
<dbReference type="InterPro" id="IPR004413">
    <property type="entry name" value="GatB"/>
</dbReference>
<dbReference type="InterPro" id="IPR042114">
    <property type="entry name" value="GatB_C_1"/>
</dbReference>
<dbReference type="InterPro" id="IPR023168">
    <property type="entry name" value="GatB_Yqey_C_2"/>
</dbReference>
<dbReference type="InterPro" id="IPR017958">
    <property type="entry name" value="Gln-tRNA_amidoTrfase_suB_CS"/>
</dbReference>
<dbReference type="InterPro" id="IPR014746">
    <property type="entry name" value="Gln_synth/guanido_kin_cat_dom"/>
</dbReference>
<dbReference type="NCBIfam" id="TIGR00133">
    <property type="entry name" value="gatB"/>
    <property type="match status" value="1"/>
</dbReference>
<dbReference type="NCBIfam" id="NF004011">
    <property type="entry name" value="PRK05477.1-1"/>
    <property type="match status" value="1"/>
</dbReference>
<dbReference type="NCBIfam" id="NF004012">
    <property type="entry name" value="PRK05477.1-2"/>
    <property type="match status" value="1"/>
</dbReference>
<dbReference type="NCBIfam" id="NF004014">
    <property type="entry name" value="PRK05477.1-4"/>
    <property type="match status" value="1"/>
</dbReference>
<dbReference type="PANTHER" id="PTHR11659">
    <property type="entry name" value="GLUTAMYL-TRNA GLN AMIDOTRANSFERASE SUBUNIT B MITOCHONDRIAL AND PROKARYOTIC PET112-RELATED"/>
    <property type="match status" value="1"/>
</dbReference>
<dbReference type="PANTHER" id="PTHR11659:SF0">
    <property type="entry name" value="GLUTAMYL-TRNA(GLN) AMIDOTRANSFERASE SUBUNIT B, MITOCHONDRIAL"/>
    <property type="match status" value="1"/>
</dbReference>
<dbReference type="Pfam" id="PF02934">
    <property type="entry name" value="GatB_N"/>
    <property type="match status" value="1"/>
</dbReference>
<dbReference type="Pfam" id="PF02637">
    <property type="entry name" value="GatB_Yqey"/>
    <property type="match status" value="1"/>
</dbReference>
<dbReference type="SMART" id="SM00845">
    <property type="entry name" value="GatB_Yqey"/>
    <property type="match status" value="1"/>
</dbReference>
<dbReference type="SUPFAM" id="SSF89095">
    <property type="entry name" value="GatB/YqeY motif"/>
    <property type="match status" value="1"/>
</dbReference>
<dbReference type="SUPFAM" id="SSF55931">
    <property type="entry name" value="Glutamine synthetase/guanido kinase"/>
    <property type="match status" value="1"/>
</dbReference>
<dbReference type="PROSITE" id="PS01234">
    <property type="entry name" value="GATB"/>
    <property type="match status" value="1"/>
</dbReference>
<protein>
    <recommendedName>
        <fullName evidence="1">Aspartyl/glutamyl-tRNA(Asn/Gln) amidotransferase subunit B</fullName>
        <shortName evidence="1">Asp/Glu-ADT subunit B</shortName>
        <ecNumber evidence="1">6.3.5.-</ecNumber>
    </recommendedName>
</protein>
<evidence type="ECO:0000255" key="1">
    <source>
        <dbReference type="HAMAP-Rule" id="MF_00121"/>
    </source>
</evidence>
<accession>B1HTX0</accession>
<name>GATB_LYSSC</name>
<proteinExistence type="inferred from homology"/>
<keyword id="KW-0067">ATP-binding</keyword>
<keyword id="KW-0436">Ligase</keyword>
<keyword id="KW-0547">Nucleotide-binding</keyword>
<keyword id="KW-0648">Protein biosynthesis</keyword>
<reference key="1">
    <citation type="journal article" date="2008" name="J. Bacteriol.">
        <title>Complete genome sequence of the mosquitocidal bacterium Bacillus sphaericus C3-41 and comparison with those of closely related Bacillus species.</title>
        <authorList>
            <person name="Hu X."/>
            <person name="Fan W."/>
            <person name="Han B."/>
            <person name="Liu H."/>
            <person name="Zheng D."/>
            <person name="Li Q."/>
            <person name="Dong W."/>
            <person name="Yan J."/>
            <person name="Gao M."/>
            <person name="Berry C."/>
            <person name="Yuan Z."/>
        </authorList>
    </citation>
    <scope>NUCLEOTIDE SEQUENCE [LARGE SCALE GENOMIC DNA]</scope>
    <source>
        <strain>C3-41</strain>
    </source>
</reference>
<sequence>MNFETVIGLEVHVELKTNSKIFSPAPAHFGAEPNTNTTVIDLGYPGVLPVLNKNVVDFAMRAALALNMEIEQETKFDRKNYFYPDNPKAYQISQFDKPIGKNGWIDIEVDGYTKRIGITRLHMEEDAGKLSHAGDHSLVDFNRQGTPLVEIVSEPDIRTPNEAYAYLEKLKSIIQYTDVSDCKMEEGSLRCDANISIRPYGQEEFGTKTELKNLNSFNYVRRGLEHEELRQADVLLSGGVIEQETRRFDEKTGKTILMRVKEGTDDYRYFPEPDLVRLSIDDAWLERVKSEIPELPDARKKRYVEELGLTPYDAGVLVISKEISDFFESMIVNGADAKLSANWLMGDVSAYLNAEQKDLKDTALTPENLAEMVKLITDGTISSKIGKKVFAELVENGGSAQEIVKAKGLVQISDEGALLAIVTEVLDNNAQSIEDFKNGKDRAIGFLVGQIMKATKGQANPPMVNKLLQQEIAKR</sequence>